<protein>
    <recommendedName>
        <fullName evidence="4">Guanine nucleotide exchange factor rei-1</fullName>
    </recommendedName>
</protein>
<reference key="1">
    <citation type="journal article" date="1998" name="Science">
        <title>Genome sequence of the nematode C. elegans: a platform for investigating biology.</title>
        <authorList>
            <consortium name="The C. elegans sequencing consortium"/>
        </authorList>
    </citation>
    <scope>NUCLEOTIDE SEQUENCE [LARGE SCALE GENOMIC DNA]</scope>
    <source>
        <strain>Bristol N2</strain>
    </source>
</reference>
<reference key="2">
    <citation type="journal article" date="2015" name="Dev. Cell">
        <title>REI-1 is a guanine nucleotide exchange factor regulating RAB-11 localization and function in C. elegans embryos.</title>
        <authorList>
            <person name="Sakaguchi A."/>
            <person name="Sato M."/>
            <person name="Sato K."/>
            <person name="Gengyo-Ando K."/>
            <person name="Yorimitsu T."/>
            <person name="Nakai J."/>
            <person name="Hara T."/>
            <person name="Sato K."/>
            <person name="Sato K."/>
        </authorList>
    </citation>
    <scope>FUNCTION</scope>
    <scope>SUBUNIT</scope>
    <scope>INTERACTION WITH RAB-11.1</scope>
    <scope>SUBCELLULAR LOCATION</scope>
    <scope>TISSUE SPECIFICITY</scope>
    <scope>DEVELOPMENTAL STAGE</scope>
    <scope>DISRUPTION PHENOTYPE</scope>
</reference>
<name>REI1_CAEEL</name>
<gene>
    <name evidence="5" type="primary">rei-1</name>
    <name evidence="5" type="ORF">C03C10.4</name>
</gene>
<accession>P42171</accession>
<dbReference type="EMBL" id="Z35637">
    <property type="protein sequence ID" value="CAA84689.1"/>
    <property type="molecule type" value="Genomic_DNA"/>
</dbReference>
<dbReference type="PIR" id="T18877">
    <property type="entry name" value="T18877"/>
</dbReference>
<dbReference type="RefSeq" id="NP_001379059.1">
    <property type="nucleotide sequence ID" value="NM_001393313.1"/>
</dbReference>
<dbReference type="RefSeq" id="NP_497822.1">
    <property type="nucleotide sequence ID" value="NM_065421.3"/>
</dbReference>
<dbReference type="SMR" id="P42171"/>
<dbReference type="BioGRID" id="40763">
    <property type="interactions" value="13"/>
</dbReference>
<dbReference type="DIP" id="DIP-26110N"/>
<dbReference type="FunCoup" id="P42171">
    <property type="interactions" value="254"/>
</dbReference>
<dbReference type="IntAct" id="P42171">
    <property type="interactions" value="12"/>
</dbReference>
<dbReference type="STRING" id="6239.C03C10.4.1"/>
<dbReference type="PaxDb" id="6239-C03C10.4"/>
<dbReference type="EnsemblMetazoa" id="C03C10.4.1">
    <property type="protein sequence ID" value="C03C10.4.1"/>
    <property type="gene ID" value="WBGene00007270"/>
</dbReference>
<dbReference type="GeneID" id="175526"/>
<dbReference type="UCSC" id="C03C10.4">
    <property type="organism name" value="c. elegans"/>
</dbReference>
<dbReference type="AGR" id="WB:WBGene00007270"/>
<dbReference type="WormBase" id="C03C10.4">
    <property type="protein sequence ID" value="CE00875"/>
    <property type="gene ID" value="WBGene00007270"/>
    <property type="gene designation" value="rei-1"/>
</dbReference>
<dbReference type="eggNOG" id="KOG2008">
    <property type="taxonomic scope" value="Eukaryota"/>
</dbReference>
<dbReference type="GeneTree" id="ENSGT00390000018500"/>
<dbReference type="HOGENOM" id="CLU_1107939_0_0_1"/>
<dbReference type="InParanoid" id="P42171"/>
<dbReference type="OMA" id="DINSYEM"/>
<dbReference type="OrthoDB" id="446789at2759"/>
<dbReference type="PhylomeDB" id="P42171"/>
<dbReference type="PRO" id="PR:P42171"/>
<dbReference type="Proteomes" id="UP000001940">
    <property type="component" value="Chromosome III"/>
</dbReference>
<dbReference type="Bgee" id="WBGene00007270">
    <property type="expression patterns" value="Expressed in germ line (C elegans) and 4 other cell types or tissues"/>
</dbReference>
<dbReference type="GO" id="GO:0005737">
    <property type="term" value="C:cytoplasm"/>
    <property type="evidence" value="ECO:0000318"/>
    <property type="project" value="GO_Central"/>
</dbReference>
<dbReference type="GO" id="GO:0000139">
    <property type="term" value="C:Golgi membrane"/>
    <property type="evidence" value="ECO:0007669"/>
    <property type="project" value="UniProtKB-SubCell"/>
</dbReference>
<dbReference type="GO" id="GO:1990676">
    <property type="term" value="C:Golgi trans cisterna membrane"/>
    <property type="evidence" value="ECO:0000314"/>
    <property type="project" value="WormBase"/>
</dbReference>
<dbReference type="GO" id="GO:0005525">
    <property type="term" value="F:GTP binding"/>
    <property type="evidence" value="ECO:0007669"/>
    <property type="project" value="UniProtKB-KW"/>
</dbReference>
<dbReference type="GO" id="GO:0005085">
    <property type="term" value="F:guanyl-nucleotide exchange factor activity"/>
    <property type="evidence" value="ECO:0000314"/>
    <property type="project" value="WormBase"/>
</dbReference>
<dbReference type="GO" id="GO:0004860">
    <property type="term" value="F:protein kinase inhibitor activity"/>
    <property type="evidence" value="ECO:0000318"/>
    <property type="project" value="GO_Central"/>
</dbReference>
<dbReference type="GO" id="GO:0051301">
    <property type="term" value="P:cell division"/>
    <property type="evidence" value="ECO:0007669"/>
    <property type="project" value="UniProtKB-KW"/>
</dbReference>
<dbReference type="GO" id="GO:0035556">
    <property type="term" value="P:intracellular signal transduction"/>
    <property type="evidence" value="ECO:0000318"/>
    <property type="project" value="GO_Central"/>
</dbReference>
<dbReference type="GO" id="GO:1903292">
    <property type="term" value="P:protein localization to Golgi membrane"/>
    <property type="evidence" value="ECO:0000315"/>
    <property type="project" value="WormBase"/>
</dbReference>
<dbReference type="InterPro" id="IPR007940">
    <property type="entry name" value="SH3BP5"/>
</dbReference>
<dbReference type="PANTHER" id="PTHR19423:SF2">
    <property type="entry name" value="GUANINE NUCLEOTIDE EXCHANGE FACTOR REI-1"/>
    <property type="match status" value="1"/>
</dbReference>
<dbReference type="PANTHER" id="PTHR19423">
    <property type="entry name" value="SH3 DOMAIN-BINDING PROTEIN 5"/>
    <property type="match status" value="1"/>
</dbReference>
<dbReference type="Pfam" id="PF05276">
    <property type="entry name" value="SH3BP5"/>
    <property type="match status" value="1"/>
</dbReference>
<evidence type="ECO:0000255" key="1"/>
<evidence type="ECO:0000256" key="2">
    <source>
        <dbReference type="SAM" id="MobiDB-lite"/>
    </source>
</evidence>
<evidence type="ECO:0000269" key="3">
    <source>
    </source>
</evidence>
<evidence type="ECO:0000305" key="4"/>
<evidence type="ECO:0000312" key="5">
    <source>
        <dbReference type="WormBase" id="C03C10.4"/>
    </source>
</evidence>
<feature type="chain" id="PRO_0000065128" description="Guanine nucleotide exchange factor rei-1" evidence="4">
    <location>
        <begin position="1"/>
        <end position="244"/>
    </location>
</feature>
<feature type="region of interest" description="Disordered" evidence="2">
    <location>
        <begin position="221"/>
        <end position="244"/>
    </location>
</feature>
<feature type="coiled-coil region" evidence="1">
    <location>
        <begin position="6"/>
        <end position="39"/>
    </location>
</feature>
<feature type="coiled-coil region" evidence="1">
    <location>
        <begin position="81"/>
        <end position="144"/>
    </location>
</feature>
<feature type="compositionally biased region" description="Low complexity" evidence="2">
    <location>
        <begin position="228"/>
        <end position="238"/>
    </location>
</feature>
<proteinExistence type="evidence at protein level"/>
<comment type="function">
    <text evidence="3">Guanine nucleotide exchange factor for Rab GTPase Rab-11.1. Spatially and temporally regulates the distribution of Rab-11.1 to target membranes during embryogenesis. Plays a role in cytokinesis, probably by targeting rab-11.1 to the cleavage furrows.</text>
</comment>
<comment type="subunit">
    <text evidence="3">Homodimer, tetramer and multimer. Interacts with rab-11.1. Binds preferentially to the GDP-bound form of rab-11.1.</text>
</comment>
<comment type="interaction">
    <interactant intactId="EBI-314321">
        <id>P42171</id>
    </interactant>
    <interactant intactId="EBI-311938">
        <id>Q22174</id>
        <label>slfl-5</label>
    </interactant>
    <organismsDiffer>false</organismsDiffer>
    <experiments>3</experiments>
</comment>
<comment type="subcellular location">
    <subcellularLocation>
        <location evidence="3">Cytoplasmic granule</location>
    </subcellularLocation>
    <subcellularLocation>
        <location evidence="3">Golgi apparatus membrane</location>
    </subcellularLocation>
    <text evidence="3">Localizes to cytoplasmic granules and to Golgi apparatus membrane in growing oocytes. Co-localizes with rab-11.1 at Golgi apparatus membrane in embryos.</text>
</comment>
<comment type="tissue specificity">
    <text evidence="3">Expressed in germ cells.</text>
</comment>
<comment type="developmental stage">
    <text evidence="3">Expressed during embryogenesis.</text>
</comment>
<comment type="disruption phenotype">
    <text evidence="3">Viable. Disrupted localization of rab-11.1 and prolonged cytokinesis in embryos. Double knockout with rei-2 results in a smaller brood size, weak embryonic lethality, enhanced mislocalization of rab-11.1 and prolonged cytokinesis in embryos.</text>
</comment>
<comment type="similarity">
    <text evidence="4">Belongs to the SH3BP5 family.</text>
</comment>
<organism>
    <name type="scientific">Caenorhabditis elegans</name>
    <dbReference type="NCBI Taxonomy" id="6239"/>
    <lineage>
        <taxon>Eukaryota</taxon>
        <taxon>Metazoa</taxon>
        <taxon>Ecdysozoa</taxon>
        <taxon>Nematoda</taxon>
        <taxon>Chromadorea</taxon>
        <taxon>Rhabditida</taxon>
        <taxon>Rhabditina</taxon>
        <taxon>Rhabditomorpha</taxon>
        <taxon>Rhabditoidea</taxon>
        <taxon>Rhabditidae</taxon>
        <taxon>Peloderinae</taxon>
        <taxon>Caenorhabditis</taxon>
    </lineage>
</organism>
<keyword id="KW-0131">Cell cycle</keyword>
<keyword id="KW-0132">Cell division</keyword>
<keyword id="KW-0175">Coiled coil</keyword>
<keyword id="KW-0333">Golgi apparatus</keyword>
<keyword id="KW-0342">GTP-binding</keyword>
<keyword id="KW-0472">Membrane</keyword>
<keyword id="KW-0547">Nucleotide-binding</keyword>
<keyword id="KW-1185">Reference proteome</keyword>
<sequence length="244" mass="28323">MTEGDDQLISIRKQLENLNNATDDINSYEMKLETVKKQFCETQLMFNKEMLGIPKKLAKHISKSRQFFDLKSRESEIRRCVQQAAAQFERQKTSVEMAREQVQILHNSLNNNQELDAEKQYVDVIEQQLELVKEAEGECLKAEKCHASRVRDLLQLEMALRKCLEENGSAIKKSRPYYERKEVLTRTMNSQLELMSILEHEVQERKDSYSDSMRALEQISDQIHQERSSQSSLAPSSDAESDSS</sequence>